<keyword id="KW-1185">Reference proteome</keyword>
<keyword id="KW-0687">Ribonucleoprotein</keyword>
<keyword id="KW-0689">Ribosomal protein</keyword>
<feature type="chain" id="PRO_0000181207" description="Large ribosomal subunit protein bL27">
    <location>
        <begin position="1"/>
        <end position="85"/>
    </location>
</feature>
<feature type="region of interest" description="Disordered" evidence="2">
    <location>
        <begin position="1"/>
        <end position="21"/>
    </location>
</feature>
<dbReference type="EMBL" id="BX571658">
    <property type="protein sequence ID" value="CAE09641.1"/>
    <property type="molecule type" value="Genomic_DNA"/>
</dbReference>
<dbReference type="RefSeq" id="WP_011138441.1">
    <property type="nucleotide sequence ID" value="NC_005090.1"/>
</dbReference>
<dbReference type="SMR" id="Q7MA29"/>
<dbReference type="STRING" id="273121.WS0504"/>
<dbReference type="KEGG" id="wsu:WS0504"/>
<dbReference type="eggNOG" id="COG0211">
    <property type="taxonomic scope" value="Bacteria"/>
</dbReference>
<dbReference type="HOGENOM" id="CLU_095424_4_0_7"/>
<dbReference type="Proteomes" id="UP000000422">
    <property type="component" value="Chromosome"/>
</dbReference>
<dbReference type="GO" id="GO:0022625">
    <property type="term" value="C:cytosolic large ribosomal subunit"/>
    <property type="evidence" value="ECO:0007669"/>
    <property type="project" value="TreeGrafter"/>
</dbReference>
<dbReference type="GO" id="GO:0003735">
    <property type="term" value="F:structural constituent of ribosome"/>
    <property type="evidence" value="ECO:0007669"/>
    <property type="project" value="InterPro"/>
</dbReference>
<dbReference type="GO" id="GO:0006412">
    <property type="term" value="P:translation"/>
    <property type="evidence" value="ECO:0007669"/>
    <property type="project" value="UniProtKB-UniRule"/>
</dbReference>
<dbReference type="FunFam" id="2.40.50.100:FF:000004">
    <property type="entry name" value="50S ribosomal protein L27"/>
    <property type="match status" value="1"/>
</dbReference>
<dbReference type="Gene3D" id="2.40.50.100">
    <property type="match status" value="1"/>
</dbReference>
<dbReference type="HAMAP" id="MF_00539">
    <property type="entry name" value="Ribosomal_bL27"/>
    <property type="match status" value="1"/>
</dbReference>
<dbReference type="InterPro" id="IPR001684">
    <property type="entry name" value="Ribosomal_bL27"/>
</dbReference>
<dbReference type="InterPro" id="IPR018261">
    <property type="entry name" value="Ribosomal_bL27_CS"/>
</dbReference>
<dbReference type="NCBIfam" id="TIGR00062">
    <property type="entry name" value="L27"/>
    <property type="match status" value="1"/>
</dbReference>
<dbReference type="PANTHER" id="PTHR15893:SF0">
    <property type="entry name" value="LARGE RIBOSOMAL SUBUNIT PROTEIN BL27M"/>
    <property type="match status" value="1"/>
</dbReference>
<dbReference type="PANTHER" id="PTHR15893">
    <property type="entry name" value="RIBOSOMAL PROTEIN L27"/>
    <property type="match status" value="1"/>
</dbReference>
<dbReference type="Pfam" id="PF01016">
    <property type="entry name" value="Ribosomal_L27"/>
    <property type="match status" value="1"/>
</dbReference>
<dbReference type="PRINTS" id="PR00063">
    <property type="entry name" value="RIBOSOMALL27"/>
</dbReference>
<dbReference type="SUPFAM" id="SSF110324">
    <property type="entry name" value="Ribosomal L27 protein-like"/>
    <property type="match status" value="1"/>
</dbReference>
<dbReference type="PROSITE" id="PS00831">
    <property type="entry name" value="RIBOSOMAL_L27"/>
    <property type="match status" value="1"/>
</dbReference>
<proteinExistence type="inferred from homology"/>
<name>RL27_WOLSU</name>
<sequence length="85" mass="9351">MAHKKGQGSTQNNRDSAGRRLGVKKFGGEFVRAGNIIIRQRGTKVHPGSNVGMGTDHTIFALIDGIVKFERKDKERKKVSIYPAS</sequence>
<gene>
    <name evidence="1" type="primary">rpmA</name>
    <name type="ordered locus">WS0504</name>
</gene>
<protein>
    <recommendedName>
        <fullName evidence="1">Large ribosomal subunit protein bL27</fullName>
    </recommendedName>
    <alternativeName>
        <fullName evidence="3">50S ribosomal protein L27</fullName>
    </alternativeName>
</protein>
<accession>Q7MA29</accession>
<reference key="1">
    <citation type="journal article" date="2003" name="Proc. Natl. Acad. Sci. U.S.A.">
        <title>Complete genome sequence and analysis of Wolinella succinogenes.</title>
        <authorList>
            <person name="Baar C."/>
            <person name="Eppinger M."/>
            <person name="Raddatz G."/>
            <person name="Simon J."/>
            <person name="Lanz C."/>
            <person name="Klimmek O."/>
            <person name="Nandakumar R."/>
            <person name="Gross R."/>
            <person name="Rosinus A."/>
            <person name="Keller H."/>
            <person name="Jagtap P."/>
            <person name="Linke B."/>
            <person name="Meyer F."/>
            <person name="Lederer H."/>
            <person name="Schuster S.C."/>
        </authorList>
    </citation>
    <scope>NUCLEOTIDE SEQUENCE [LARGE SCALE GENOMIC DNA]</scope>
    <source>
        <strain>ATCC 29543 / DSM 1740 / CCUG 13145 / JCM 31913 / LMG 7466 / NCTC 11488 / FDC 602W</strain>
    </source>
</reference>
<comment type="similarity">
    <text evidence="1">Belongs to the bacterial ribosomal protein bL27 family.</text>
</comment>
<organism>
    <name type="scientific">Wolinella succinogenes (strain ATCC 29543 / DSM 1740 / CCUG 13145 / JCM 31913 / LMG 7466 / NCTC 11488 / FDC 602W)</name>
    <name type="common">Vibrio succinogenes</name>
    <dbReference type="NCBI Taxonomy" id="273121"/>
    <lineage>
        <taxon>Bacteria</taxon>
        <taxon>Pseudomonadati</taxon>
        <taxon>Campylobacterota</taxon>
        <taxon>Epsilonproteobacteria</taxon>
        <taxon>Campylobacterales</taxon>
        <taxon>Helicobacteraceae</taxon>
        <taxon>Wolinella</taxon>
    </lineage>
</organism>
<evidence type="ECO:0000255" key="1">
    <source>
        <dbReference type="HAMAP-Rule" id="MF_00539"/>
    </source>
</evidence>
<evidence type="ECO:0000256" key="2">
    <source>
        <dbReference type="SAM" id="MobiDB-lite"/>
    </source>
</evidence>
<evidence type="ECO:0000305" key="3"/>